<reference key="1">
    <citation type="journal article" date="2005" name="DNA Res.">
        <title>Complete genome sequence of the facultative anaerobic magnetotactic bacterium Magnetospirillum sp. strain AMB-1.</title>
        <authorList>
            <person name="Matsunaga T."/>
            <person name="Okamura Y."/>
            <person name="Fukuda Y."/>
            <person name="Wahyudi A.T."/>
            <person name="Murase Y."/>
            <person name="Takeyama H."/>
        </authorList>
    </citation>
    <scope>NUCLEOTIDE SEQUENCE [LARGE SCALE GENOMIC DNA]</scope>
    <source>
        <strain>ATCC 700264 / AMB-1</strain>
    </source>
</reference>
<name>TRMB_PARM1</name>
<organism>
    <name type="scientific">Paramagnetospirillum magneticum (strain ATCC 700264 / AMB-1)</name>
    <name type="common">Magnetospirillum magneticum</name>
    <dbReference type="NCBI Taxonomy" id="342108"/>
    <lineage>
        <taxon>Bacteria</taxon>
        <taxon>Pseudomonadati</taxon>
        <taxon>Pseudomonadota</taxon>
        <taxon>Alphaproteobacteria</taxon>
        <taxon>Rhodospirillales</taxon>
        <taxon>Magnetospirillaceae</taxon>
        <taxon>Paramagnetospirillum</taxon>
    </lineage>
</organism>
<feature type="chain" id="PRO_0000288174" description="tRNA (guanine-N(7)-)-methyltransferase">
    <location>
        <begin position="1"/>
        <end position="238"/>
    </location>
</feature>
<feature type="active site" evidence="1">
    <location>
        <position position="143"/>
    </location>
</feature>
<feature type="binding site" evidence="2">
    <location>
        <position position="68"/>
    </location>
    <ligand>
        <name>S-adenosyl-L-methionine</name>
        <dbReference type="ChEBI" id="CHEBI:59789"/>
    </ligand>
</feature>
<feature type="binding site" evidence="2">
    <location>
        <position position="93"/>
    </location>
    <ligand>
        <name>S-adenosyl-L-methionine</name>
        <dbReference type="ChEBI" id="CHEBI:59789"/>
    </ligand>
</feature>
<feature type="binding site" evidence="2">
    <location>
        <position position="121"/>
    </location>
    <ligand>
        <name>S-adenosyl-L-methionine</name>
        <dbReference type="ChEBI" id="CHEBI:59789"/>
    </ligand>
</feature>
<feature type="binding site" evidence="2">
    <location>
        <position position="143"/>
    </location>
    <ligand>
        <name>S-adenosyl-L-methionine</name>
        <dbReference type="ChEBI" id="CHEBI:59789"/>
    </ligand>
</feature>
<feature type="binding site" evidence="2">
    <location>
        <position position="147"/>
    </location>
    <ligand>
        <name>substrate</name>
    </ligand>
</feature>
<feature type="binding site" evidence="2">
    <location>
        <position position="179"/>
    </location>
    <ligand>
        <name>substrate</name>
    </ligand>
</feature>
<feature type="binding site" evidence="2">
    <location>
        <begin position="216"/>
        <end position="219"/>
    </location>
    <ligand>
        <name>substrate</name>
    </ligand>
</feature>
<comment type="function">
    <text evidence="2">Catalyzes the formation of N(7)-methylguanine at position 46 (m7G46) in tRNA.</text>
</comment>
<comment type="catalytic activity">
    <reaction evidence="2">
        <text>guanosine(46) in tRNA + S-adenosyl-L-methionine = N(7)-methylguanosine(46) in tRNA + S-adenosyl-L-homocysteine</text>
        <dbReference type="Rhea" id="RHEA:42708"/>
        <dbReference type="Rhea" id="RHEA-COMP:10188"/>
        <dbReference type="Rhea" id="RHEA-COMP:10189"/>
        <dbReference type="ChEBI" id="CHEBI:57856"/>
        <dbReference type="ChEBI" id="CHEBI:59789"/>
        <dbReference type="ChEBI" id="CHEBI:74269"/>
        <dbReference type="ChEBI" id="CHEBI:74480"/>
        <dbReference type="EC" id="2.1.1.33"/>
    </reaction>
</comment>
<comment type="pathway">
    <text evidence="2">tRNA modification; N(7)-methylguanine-tRNA biosynthesis.</text>
</comment>
<comment type="similarity">
    <text evidence="2">Belongs to the class I-like SAM-binding methyltransferase superfamily. TrmB family.</text>
</comment>
<dbReference type="EC" id="2.1.1.33" evidence="2"/>
<dbReference type="EMBL" id="AP007255">
    <property type="protein sequence ID" value="BAE53274.1"/>
    <property type="molecule type" value="Genomic_DNA"/>
</dbReference>
<dbReference type="RefSeq" id="WP_011386814.1">
    <property type="nucleotide sequence ID" value="NC_007626.1"/>
</dbReference>
<dbReference type="SMR" id="Q2VYQ1"/>
<dbReference type="STRING" id="342108.amb4470"/>
<dbReference type="KEGG" id="mag:amb4470"/>
<dbReference type="HOGENOM" id="CLU_050910_0_3_5"/>
<dbReference type="OrthoDB" id="9802090at2"/>
<dbReference type="UniPathway" id="UPA00989"/>
<dbReference type="Proteomes" id="UP000007058">
    <property type="component" value="Chromosome"/>
</dbReference>
<dbReference type="GO" id="GO:0043527">
    <property type="term" value="C:tRNA methyltransferase complex"/>
    <property type="evidence" value="ECO:0007669"/>
    <property type="project" value="TreeGrafter"/>
</dbReference>
<dbReference type="GO" id="GO:0008176">
    <property type="term" value="F:tRNA (guanine(46)-N7)-methyltransferase activity"/>
    <property type="evidence" value="ECO:0007669"/>
    <property type="project" value="UniProtKB-UniRule"/>
</dbReference>
<dbReference type="CDD" id="cd02440">
    <property type="entry name" value="AdoMet_MTases"/>
    <property type="match status" value="1"/>
</dbReference>
<dbReference type="Gene3D" id="3.40.50.150">
    <property type="entry name" value="Vaccinia Virus protein VP39"/>
    <property type="match status" value="1"/>
</dbReference>
<dbReference type="HAMAP" id="MF_01057">
    <property type="entry name" value="tRNA_methyltr_TrmB"/>
    <property type="match status" value="1"/>
</dbReference>
<dbReference type="InterPro" id="IPR029063">
    <property type="entry name" value="SAM-dependent_MTases_sf"/>
</dbReference>
<dbReference type="InterPro" id="IPR003358">
    <property type="entry name" value="tRNA_(Gua-N-7)_MeTrfase_Trmb"/>
</dbReference>
<dbReference type="InterPro" id="IPR055361">
    <property type="entry name" value="tRNA_methyltr_TrmB_bact"/>
</dbReference>
<dbReference type="NCBIfam" id="TIGR00091">
    <property type="entry name" value="tRNA (guanosine(46)-N7)-methyltransferase TrmB"/>
    <property type="match status" value="1"/>
</dbReference>
<dbReference type="PANTHER" id="PTHR23417">
    <property type="entry name" value="3-DEOXY-D-MANNO-OCTULOSONIC-ACID TRANSFERASE/TRNA GUANINE-N 7 - -METHYLTRANSFERASE"/>
    <property type="match status" value="1"/>
</dbReference>
<dbReference type="PANTHER" id="PTHR23417:SF14">
    <property type="entry name" value="PENTACOTRIPEPTIDE-REPEAT REGION OF PRORP DOMAIN-CONTAINING PROTEIN"/>
    <property type="match status" value="1"/>
</dbReference>
<dbReference type="Pfam" id="PF02390">
    <property type="entry name" value="Methyltransf_4"/>
    <property type="match status" value="1"/>
</dbReference>
<dbReference type="SUPFAM" id="SSF53335">
    <property type="entry name" value="S-adenosyl-L-methionine-dependent methyltransferases"/>
    <property type="match status" value="1"/>
</dbReference>
<dbReference type="PROSITE" id="PS51625">
    <property type="entry name" value="SAM_MT_TRMB"/>
    <property type="match status" value="1"/>
</dbReference>
<sequence>MGKHAENGNAAAERPRFFGRRQGKALRRNALGLIEDLLPRLTVAVPEPDERVEPALLFPGAVRSVWLEVGFGGGEHLAQLAEDNPDIGLIGCEVFRNGIASLLGHVQARQLGNNVRVFPEDVRLLLPALPDGSLGRVFVLFPDPWPKTRHADRRFISPETLDVLARVLESGGELRVASDDPIYVAWAARHLDAHPAFEKILATADRSAVPADWPATRYEQKCITGRAPVFFLYRRRAR</sequence>
<evidence type="ECO:0000250" key="1"/>
<evidence type="ECO:0000255" key="2">
    <source>
        <dbReference type="HAMAP-Rule" id="MF_01057"/>
    </source>
</evidence>
<proteinExistence type="inferred from homology"/>
<keyword id="KW-0489">Methyltransferase</keyword>
<keyword id="KW-0949">S-adenosyl-L-methionine</keyword>
<keyword id="KW-0808">Transferase</keyword>
<keyword id="KW-0819">tRNA processing</keyword>
<accession>Q2VYQ1</accession>
<protein>
    <recommendedName>
        <fullName evidence="2">tRNA (guanine-N(7)-)-methyltransferase</fullName>
        <ecNumber evidence="2">2.1.1.33</ecNumber>
    </recommendedName>
    <alternativeName>
        <fullName evidence="2">tRNA (guanine(46)-N(7))-methyltransferase</fullName>
    </alternativeName>
    <alternativeName>
        <fullName evidence="2">tRNA(m7G46)-methyltransferase</fullName>
    </alternativeName>
</protein>
<gene>
    <name evidence="2" type="primary">trmB</name>
    <name type="ordered locus">amb4470</name>
</gene>